<proteinExistence type="evidence at protein level"/>
<keyword id="KW-0025">Alternative splicing</keyword>
<keyword id="KW-1003">Cell membrane</keyword>
<keyword id="KW-0458">Lysosome</keyword>
<keyword id="KW-0472">Membrane</keyword>
<keyword id="KW-1267">Proteomics identification</keyword>
<keyword id="KW-1185">Reference proteome</keyword>
<keyword id="KW-0812">Transmembrane</keyword>
<keyword id="KW-1133">Transmembrane helix</keyword>
<comment type="function">
    <text evidence="2">Nonselective cationic channel with high permeability to Ca(2+). Component of a mechanosensitive cation channel, confers mechanically activated (MA) currents with slow inactivation kinetics. May contribute to proprioception.</text>
</comment>
<comment type="catalytic activity">
    <reaction evidence="2">
        <text>Ca(2+)(in) = Ca(2+)(out)</text>
        <dbReference type="Rhea" id="RHEA:29671"/>
        <dbReference type="ChEBI" id="CHEBI:29108"/>
    </reaction>
</comment>
<comment type="catalytic activity">
    <reaction evidence="2">
        <text>Na(+)(in) = Na(+)(out)</text>
        <dbReference type="Rhea" id="RHEA:34963"/>
        <dbReference type="ChEBI" id="CHEBI:29101"/>
    </reaction>
</comment>
<comment type="catalytic activity">
    <reaction evidence="2">
        <text>K(+)(in) = K(+)(out)</text>
        <dbReference type="Rhea" id="RHEA:29463"/>
        <dbReference type="ChEBI" id="CHEBI:29103"/>
    </reaction>
</comment>
<comment type="catalytic activity">
    <reaction evidence="2">
        <text>Mg(2+)(in) = Mg(2+)(out)</text>
        <dbReference type="Rhea" id="RHEA:29827"/>
        <dbReference type="ChEBI" id="CHEBI:18420"/>
    </reaction>
</comment>
<comment type="subcellular location">
    <subcellularLocation>
        <location evidence="4">Cell membrane</location>
        <topology evidence="3">Multi-pass membrane protein</topology>
    </subcellularLocation>
    <subcellularLocation>
        <location evidence="7">Lysosome membrane</location>
        <topology evidence="6">Multi-pass membrane protein</topology>
    </subcellularLocation>
    <text evidence="4">Localizes at the plasma membrane. A portion co-localizes with LAMP1 lysosomal marker (PubMed:25608530).</text>
</comment>
<comment type="alternative products">
    <event type="alternative splicing"/>
    <isoform>
        <id>B9EJG8-1</id>
        <name>1</name>
        <sequence type="displayed"/>
    </isoform>
    <isoform>
        <id>B9EJG8-2</id>
        <name>2</name>
        <sequence type="described" ref="VSP_039350"/>
    </isoform>
</comment>
<comment type="miscellaneous">
    <text evidence="2">Tentonin comes from the Greek 'tentono' meaning to stretch.</text>
</comment>
<comment type="similarity">
    <text evidence="6">Belongs to the DRAM/TMEM150 family.</text>
</comment>
<comment type="sequence caution" evidence="6">
    <conflict type="erroneous initiation">
        <sequence resource="EMBL-CDS" id="BAH12581"/>
    </conflict>
    <text>Extended N-terminus.</text>
</comment>
<feature type="chain" id="PRO_0000395032" description="Transmembrane protein 150C">
    <location>
        <begin position="1"/>
        <end position="249"/>
    </location>
</feature>
<feature type="topological domain" description="Cytoplasmic" evidence="6">
    <location>
        <begin position="1"/>
        <end position="9"/>
    </location>
</feature>
<feature type="transmembrane region" description="Helical" evidence="3">
    <location>
        <begin position="10"/>
        <end position="30"/>
    </location>
</feature>
<feature type="topological domain" description="Extracellular" evidence="6">
    <location>
        <begin position="31"/>
        <end position="64"/>
    </location>
</feature>
<feature type="transmembrane region" description="Helical" evidence="3">
    <location>
        <begin position="65"/>
        <end position="85"/>
    </location>
</feature>
<feature type="topological domain" description="Cytoplasmic" evidence="6">
    <location>
        <begin position="86"/>
        <end position="97"/>
    </location>
</feature>
<feature type="transmembrane region" description="Helical" evidence="3">
    <location>
        <begin position="98"/>
        <end position="118"/>
    </location>
</feature>
<feature type="topological domain" description="Extracellular" evidence="6">
    <location>
        <begin position="119"/>
        <end position="130"/>
    </location>
</feature>
<feature type="transmembrane region" description="Helical" evidence="3">
    <location>
        <begin position="131"/>
        <end position="151"/>
    </location>
</feature>
<feature type="topological domain" description="Cytoplasmic" evidence="6">
    <location>
        <begin position="152"/>
        <end position="168"/>
    </location>
</feature>
<feature type="transmembrane region" description="Helical" evidence="3">
    <location>
        <begin position="169"/>
        <end position="189"/>
    </location>
</feature>
<feature type="topological domain" description="Extracellular" evidence="6">
    <location>
        <begin position="190"/>
        <end position="192"/>
    </location>
</feature>
<feature type="transmembrane region" description="Helical" evidence="3">
    <location>
        <begin position="193"/>
        <end position="213"/>
    </location>
</feature>
<feature type="topological domain" description="Cytoplasmic" evidence="1">
    <location>
        <begin position="214"/>
        <end position="249"/>
    </location>
</feature>
<feature type="splice variant" id="VSP_039350" description="In isoform 2." evidence="5">
    <location>
        <begin position="142"/>
        <end position="210"/>
    </location>
</feature>
<feature type="sequence conflict" description="In Ref. 1; BAH13412." evidence="6" ref="1">
    <original>K</original>
    <variation>R</variation>
    <location>
        <position position="46"/>
    </location>
</feature>
<feature type="sequence conflict" description="In Ref. 1; BAH13178." evidence="6" ref="1">
    <original>I</original>
    <variation>V</variation>
    <location>
        <position position="101"/>
    </location>
</feature>
<dbReference type="EMBL" id="AK297434">
    <property type="protein sequence ID" value="BAH12581.1"/>
    <property type="status" value="ALT_INIT"/>
    <property type="molecule type" value="mRNA"/>
</dbReference>
<dbReference type="EMBL" id="AK297512">
    <property type="protein sequence ID" value="BAH12599.1"/>
    <property type="molecule type" value="mRNA"/>
</dbReference>
<dbReference type="EMBL" id="AK299942">
    <property type="protein sequence ID" value="BAH13178.1"/>
    <property type="molecule type" value="mRNA"/>
</dbReference>
<dbReference type="EMBL" id="AK301116">
    <property type="protein sequence ID" value="BAH13412.1"/>
    <property type="molecule type" value="mRNA"/>
</dbReference>
<dbReference type="EMBL" id="AC067942">
    <property type="status" value="NOT_ANNOTATED_CDS"/>
    <property type="molecule type" value="Genomic_DNA"/>
</dbReference>
<dbReference type="EMBL" id="CH471057">
    <property type="protein sequence ID" value="EAX05896.1"/>
    <property type="molecule type" value="Genomic_DNA"/>
</dbReference>
<dbReference type="EMBL" id="BC147019">
    <property type="protein sequence ID" value="AAI47020.1"/>
    <property type="molecule type" value="mRNA"/>
</dbReference>
<dbReference type="EMBL" id="BC147027">
    <property type="protein sequence ID" value="AAI47028.1"/>
    <property type="molecule type" value="mRNA"/>
</dbReference>
<dbReference type="CCDS" id="CCDS47087.1">
    <molecule id="B9EJG8-1"/>
</dbReference>
<dbReference type="RefSeq" id="NP_001073975.1">
    <molecule id="B9EJG8-1"/>
    <property type="nucleotide sequence ID" value="NM_001080506.3"/>
</dbReference>
<dbReference type="RefSeq" id="NP_001340384.1">
    <molecule id="B9EJG8-2"/>
    <property type="nucleotide sequence ID" value="NM_001353455.2"/>
</dbReference>
<dbReference type="BioGRID" id="137095">
    <property type="interactions" value="2"/>
</dbReference>
<dbReference type="FunCoup" id="B9EJG8">
    <property type="interactions" value="54"/>
</dbReference>
<dbReference type="STRING" id="9606.ENSP00000420919"/>
<dbReference type="TCDB" id="1.A.154.1.1">
    <property type="family name" value="the tentonin or tmem150 (tmem150) family"/>
</dbReference>
<dbReference type="TCDB" id="8.A.113.1.1">
    <property type="family name" value="the tentonin or tmem150 (tmem150) family"/>
</dbReference>
<dbReference type="iPTMnet" id="B9EJG8"/>
<dbReference type="PhosphoSitePlus" id="B9EJG8"/>
<dbReference type="BioMuta" id="TMEM150C"/>
<dbReference type="jPOST" id="B9EJG8"/>
<dbReference type="MassIVE" id="B9EJG8"/>
<dbReference type="PaxDb" id="9606-ENSP00000420919"/>
<dbReference type="PeptideAtlas" id="B9EJG8"/>
<dbReference type="ProteomicsDB" id="7533">
    <molecule id="B9EJG8-1"/>
</dbReference>
<dbReference type="ProteomicsDB" id="7534">
    <molecule id="B9EJG8-2"/>
</dbReference>
<dbReference type="Antibodypedia" id="58904">
    <property type="antibodies" value="15 antibodies from 8 providers"/>
</dbReference>
<dbReference type="DNASU" id="441027"/>
<dbReference type="Ensembl" id="ENST00000449862.7">
    <molecule id="B9EJG8-1"/>
    <property type="protein sequence ID" value="ENSP00000403438.2"/>
    <property type="gene ID" value="ENSG00000249242.8"/>
</dbReference>
<dbReference type="Ensembl" id="ENST00000515780.6">
    <molecule id="B9EJG8-1"/>
    <property type="protein sequence ID" value="ENSP00000420919.1"/>
    <property type="gene ID" value="ENSG00000249242.8"/>
</dbReference>
<dbReference type="GeneID" id="441027"/>
<dbReference type="KEGG" id="hsa:441027"/>
<dbReference type="MANE-Select" id="ENST00000449862.7">
    <property type="protein sequence ID" value="ENSP00000403438.2"/>
    <property type="RefSeq nucleotide sequence ID" value="NM_001080506.3"/>
    <property type="RefSeq protein sequence ID" value="NP_001073975.1"/>
</dbReference>
<dbReference type="UCSC" id="uc003hmy.2">
    <molecule id="B9EJG8-1"/>
    <property type="organism name" value="human"/>
</dbReference>
<dbReference type="AGR" id="HGNC:37263"/>
<dbReference type="CTD" id="441027"/>
<dbReference type="DisGeNET" id="441027"/>
<dbReference type="GeneCards" id="TMEM150C"/>
<dbReference type="HGNC" id="HGNC:37263">
    <property type="gene designation" value="TMEM150C"/>
</dbReference>
<dbReference type="HPA" id="ENSG00000249242">
    <property type="expression patterns" value="Tissue enhanced (epididymis)"/>
</dbReference>
<dbReference type="neXtProt" id="NX_B9EJG8"/>
<dbReference type="OpenTargets" id="ENSG00000249242"/>
<dbReference type="PharmGKB" id="PA165664735"/>
<dbReference type="VEuPathDB" id="HostDB:ENSG00000249242"/>
<dbReference type="eggNOG" id="KOG4320">
    <property type="taxonomic scope" value="Eukaryota"/>
</dbReference>
<dbReference type="GeneTree" id="ENSGT01030000234578"/>
<dbReference type="HOGENOM" id="CLU_059992_0_1_1"/>
<dbReference type="InParanoid" id="B9EJG8"/>
<dbReference type="OMA" id="VYFIAVY"/>
<dbReference type="OrthoDB" id="9865811at2759"/>
<dbReference type="PAN-GO" id="B9EJG8">
    <property type="GO annotations" value="1 GO annotation based on evolutionary models"/>
</dbReference>
<dbReference type="PhylomeDB" id="B9EJG8"/>
<dbReference type="TreeFam" id="TF314508"/>
<dbReference type="PathwayCommons" id="B9EJG8"/>
<dbReference type="BioGRID-ORCS" id="441027">
    <property type="hits" value="14 hits in 1144 CRISPR screens"/>
</dbReference>
<dbReference type="ChiTaRS" id="TMEM150C">
    <property type="organism name" value="human"/>
</dbReference>
<dbReference type="GenomeRNAi" id="441027"/>
<dbReference type="Pharos" id="B9EJG8">
    <property type="development level" value="Tdark"/>
</dbReference>
<dbReference type="PRO" id="PR:B9EJG8"/>
<dbReference type="Proteomes" id="UP000005640">
    <property type="component" value="Chromosome 4"/>
</dbReference>
<dbReference type="RNAct" id="B9EJG8">
    <property type="molecule type" value="protein"/>
</dbReference>
<dbReference type="Bgee" id="ENSG00000249242">
    <property type="expression patterns" value="Expressed in corpus epididymis and 195 other cell types or tissues"/>
</dbReference>
<dbReference type="ExpressionAtlas" id="B9EJG8">
    <property type="expression patterns" value="baseline and differential"/>
</dbReference>
<dbReference type="GO" id="GO:0005765">
    <property type="term" value="C:lysosomal membrane"/>
    <property type="evidence" value="ECO:0000304"/>
    <property type="project" value="UniProtKB"/>
</dbReference>
<dbReference type="GO" id="GO:0005886">
    <property type="term" value="C:plasma membrane"/>
    <property type="evidence" value="ECO:0000314"/>
    <property type="project" value="UniProtKB"/>
</dbReference>
<dbReference type="GO" id="GO:0140135">
    <property type="term" value="F:mechanosensitive monoatomic cation channel activity"/>
    <property type="evidence" value="ECO:0000250"/>
    <property type="project" value="UniProtKB"/>
</dbReference>
<dbReference type="GO" id="GO:0071260">
    <property type="term" value="P:cellular response to mechanical stimulus"/>
    <property type="evidence" value="ECO:0000250"/>
    <property type="project" value="UniProtKB"/>
</dbReference>
<dbReference type="GO" id="GO:0019230">
    <property type="term" value="P:proprioception"/>
    <property type="evidence" value="ECO:0000250"/>
    <property type="project" value="UniProtKB"/>
</dbReference>
<dbReference type="InterPro" id="IPR050911">
    <property type="entry name" value="DRAM/TMEM150_Autophagy_Mod"/>
</dbReference>
<dbReference type="InterPro" id="IPR019402">
    <property type="entry name" value="Frag1/DRAM/Sfk1"/>
</dbReference>
<dbReference type="PANTHER" id="PTHR21324">
    <property type="entry name" value="FASTING-INDUCIBLE INTEGRAL MEMBRANE PROTEIN TM6P1-RELATED"/>
    <property type="match status" value="1"/>
</dbReference>
<dbReference type="PANTHER" id="PTHR21324:SF7">
    <property type="entry name" value="TRANSMEMBRANE PROTEIN 150C"/>
    <property type="match status" value="1"/>
</dbReference>
<dbReference type="Pfam" id="PF10277">
    <property type="entry name" value="Frag1"/>
    <property type="match status" value="1"/>
</dbReference>
<accession>B9EJG8</accession>
<accession>B7Z4J5</accession>
<accession>B7Z4L3</accession>
<accession>B7Z692</accession>
<accession>B7Z6X6</accession>
<sequence>MDGKKCSVWMFLPLVFTLFTSAGLWIVYFIAVEDDKILPLNSAERKPGVKHAPYISIAGDDPPASCVFSQVMNMAAFLALVVAVLRFIQLKPKVLNPWLNISGLVALCLASFGMTLLGNFQLTNDEEIHNVGTSLTFGFGTLTCWIQAALTLKVNIKNEGRRVGIPRVILSASITLCVVLYFILMAQSIHMYAARVQWGLVMCFLSYFGTFAVEFRHYRYEIVCSEYQENFLSFSESLSEASEYQTDQV</sequence>
<reference key="1">
    <citation type="journal article" date="2004" name="Nat. Genet.">
        <title>Complete sequencing and characterization of 21,243 full-length human cDNAs.</title>
        <authorList>
            <person name="Ota T."/>
            <person name="Suzuki Y."/>
            <person name="Nishikawa T."/>
            <person name="Otsuki T."/>
            <person name="Sugiyama T."/>
            <person name="Irie R."/>
            <person name="Wakamatsu A."/>
            <person name="Hayashi K."/>
            <person name="Sato H."/>
            <person name="Nagai K."/>
            <person name="Kimura K."/>
            <person name="Makita H."/>
            <person name="Sekine M."/>
            <person name="Obayashi M."/>
            <person name="Nishi T."/>
            <person name="Shibahara T."/>
            <person name="Tanaka T."/>
            <person name="Ishii S."/>
            <person name="Yamamoto J."/>
            <person name="Saito K."/>
            <person name="Kawai Y."/>
            <person name="Isono Y."/>
            <person name="Nakamura Y."/>
            <person name="Nagahari K."/>
            <person name="Murakami K."/>
            <person name="Yasuda T."/>
            <person name="Iwayanagi T."/>
            <person name="Wagatsuma M."/>
            <person name="Shiratori A."/>
            <person name="Sudo H."/>
            <person name="Hosoiri T."/>
            <person name="Kaku Y."/>
            <person name="Kodaira H."/>
            <person name="Kondo H."/>
            <person name="Sugawara M."/>
            <person name="Takahashi M."/>
            <person name="Kanda K."/>
            <person name="Yokoi T."/>
            <person name="Furuya T."/>
            <person name="Kikkawa E."/>
            <person name="Omura Y."/>
            <person name="Abe K."/>
            <person name="Kamihara K."/>
            <person name="Katsuta N."/>
            <person name="Sato K."/>
            <person name="Tanikawa M."/>
            <person name="Yamazaki M."/>
            <person name="Ninomiya K."/>
            <person name="Ishibashi T."/>
            <person name="Yamashita H."/>
            <person name="Murakawa K."/>
            <person name="Fujimori K."/>
            <person name="Tanai H."/>
            <person name="Kimata M."/>
            <person name="Watanabe M."/>
            <person name="Hiraoka S."/>
            <person name="Chiba Y."/>
            <person name="Ishida S."/>
            <person name="Ono Y."/>
            <person name="Takiguchi S."/>
            <person name="Watanabe S."/>
            <person name="Yosida M."/>
            <person name="Hotuta T."/>
            <person name="Kusano J."/>
            <person name="Kanehori K."/>
            <person name="Takahashi-Fujii A."/>
            <person name="Hara H."/>
            <person name="Tanase T.-O."/>
            <person name="Nomura Y."/>
            <person name="Togiya S."/>
            <person name="Komai F."/>
            <person name="Hara R."/>
            <person name="Takeuchi K."/>
            <person name="Arita M."/>
            <person name="Imose N."/>
            <person name="Musashino K."/>
            <person name="Yuuki H."/>
            <person name="Oshima A."/>
            <person name="Sasaki N."/>
            <person name="Aotsuka S."/>
            <person name="Yoshikawa Y."/>
            <person name="Matsunawa H."/>
            <person name="Ichihara T."/>
            <person name="Shiohata N."/>
            <person name="Sano S."/>
            <person name="Moriya S."/>
            <person name="Momiyama H."/>
            <person name="Satoh N."/>
            <person name="Takami S."/>
            <person name="Terashima Y."/>
            <person name="Suzuki O."/>
            <person name="Nakagawa S."/>
            <person name="Senoh A."/>
            <person name="Mizoguchi H."/>
            <person name="Goto Y."/>
            <person name="Shimizu F."/>
            <person name="Wakebe H."/>
            <person name="Hishigaki H."/>
            <person name="Watanabe T."/>
            <person name="Sugiyama A."/>
            <person name="Takemoto M."/>
            <person name="Kawakami B."/>
            <person name="Yamazaki M."/>
            <person name="Watanabe K."/>
            <person name="Kumagai A."/>
            <person name="Itakura S."/>
            <person name="Fukuzumi Y."/>
            <person name="Fujimori Y."/>
            <person name="Komiyama M."/>
            <person name="Tashiro H."/>
            <person name="Tanigami A."/>
            <person name="Fujiwara T."/>
            <person name="Ono T."/>
            <person name="Yamada K."/>
            <person name="Fujii Y."/>
            <person name="Ozaki K."/>
            <person name="Hirao M."/>
            <person name="Ohmori Y."/>
            <person name="Kawabata A."/>
            <person name="Hikiji T."/>
            <person name="Kobatake N."/>
            <person name="Inagaki H."/>
            <person name="Ikema Y."/>
            <person name="Okamoto S."/>
            <person name="Okitani R."/>
            <person name="Kawakami T."/>
            <person name="Noguchi S."/>
            <person name="Itoh T."/>
            <person name="Shigeta K."/>
            <person name="Senba T."/>
            <person name="Matsumura K."/>
            <person name="Nakajima Y."/>
            <person name="Mizuno T."/>
            <person name="Morinaga M."/>
            <person name="Sasaki M."/>
            <person name="Togashi T."/>
            <person name="Oyama M."/>
            <person name="Hata H."/>
            <person name="Watanabe M."/>
            <person name="Komatsu T."/>
            <person name="Mizushima-Sugano J."/>
            <person name="Satoh T."/>
            <person name="Shirai Y."/>
            <person name="Takahashi Y."/>
            <person name="Nakagawa K."/>
            <person name="Okumura K."/>
            <person name="Nagase T."/>
            <person name="Nomura N."/>
            <person name="Kikuchi H."/>
            <person name="Masuho Y."/>
            <person name="Yamashita R."/>
            <person name="Nakai K."/>
            <person name="Yada T."/>
            <person name="Nakamura Y."/>
            <person name="Ohara O."/>
            <person name="Isogai T."/>
            <person name="Sugano S."/>
        </authorList>
    </citation>
    <scope>NUCLEOTIDE SEQUENCE [LARGE SCALE MRNA] (ISOFORMS 1 AND 2)</scope>
    <source>
        <tissue>Brain</tissue>
        <tissue>Spleen</tissue>
    </source>
</reference>
<reference key="2">
    <citation type="journal article" date="2005" name="Nature">
        <title>Generation and annotation of the DNA sequences of human chromosomes 2 and 4.</title>
        <authorList>
            <person name="Hillier L.W."/>
            <person name="Graves T.A."/>
            <person name="Fulton R.S."/>
            <person name="Fulton L.A."/>
            <person name="Pepin K.H."/>
            <person name="Minx P."/>
            <person name="Wagner-McPherson C."/>
            <person name="Layman D."/>
            <person name="Wylie K."/>
            <person name="Sekhon M."/>
            <person name="Becker M.C."/>
            <person name="Fewell G.A."/>
            <person name="Delehaunty K.D."/>
            <person name="Miner T.L."/>
            <person name="Nash W.E."/>
            <person name="Kremitzki C."/>
            <person name="Oddy L."/>
            <person name="Du H."/>
            <person name="Sun H."/>
            <person name="Bradshaw-Cordum H."/>
            <person name="Ali J."/>
            <person name="Carter J."/>
            <person name="Cordes M."/>
            <person name="Harris A."/>
            <person name="Isak A."/>
            <person name="van Brunt A."/>
            <person name="Nguyen C."/>
            <person name="Du F."/>
            <person name="Courtney L."/>
            <person name="Kalicki J."/>
            <person name="Ozersky P."/>
            <person name="Abbott S."/>
            <person name="Armstrong J."/>
            <person name="Belter E.A."/>
            <person name="Caruso L."/>
            <person name="Cedroni M."/>
            <person name="Cotton M."/>
            <person name="Davidson T."/>
            <person name="Desai A."/>
            <person name="Elliott G."/>
            <person name="Erb T."/>
            <person name="Fronick C."/>
            <person name="Gaige T."/>
            <person name="Haakenson W."/>
            <person name="Haglund K."/>
            <person name="Holmes A."/>
            <person name="Harkins R."/>
            <person name="Kim K."/>
            <person name="Kruchowski S.S."/>
            <person name="Strong C.M."/>
            <person name="Grewal N."/>
            <person name="Goyea E."/>
            <person name="Hou S."/>
            <person name="Levy A."/>
            <person name="Martinka S."/>
            <person name="Mead K."/>
            <person name="McLellan M.D."/>
            <person name="Meyer R."/>
            <person name="Randall-Maher J."/>
            <person name="Tomlinson C."/>
            <person name="Dauphin-Kohlberg S."/>
            <person name="Kozlowicz-Reilly A."/>
            <person name="Shah N."/>
            <person name="Swearengen-Shahid S."/>
            <person name="Snider J."/>
            <person name="Strong J.T."/>
            <person name="Thompson J."/>
            <person name="Yoakum M."/>
            <person name="Leonard S."/>
            <person name="Pearman C."/>
            <person name="Trani L."/>
            <person name="Radionenko M."/>
            <person name="Waligorski J.E."/>
            <person name="Wang C."/>
            <person name="Rock S.M."/>
            <person name="Tin-Wollam A.-M."/>
            <person name="Maupin R."/>
            <person name="Latreille P."/>
            <person name="Wendl M.C."/>
            <person name="Yang S.-P."/>
            <person name="Pohl C."/>
            <person name="Wallis J.W."/>
            <person name="Spieth J."/>
            <person name="Bieri T.A."/>
            <person name="Berkowicz N."/>
            <person name="Nelson J.O."/>
            <person name="Osborne J."/>
            <person name="Ding L."/>
            <person name="Meyer R."/>
            <person name="Sabo A."/>
            <person name="Shotland Y."/>
            <person name="Sinha P."/>
            <person name="Wohldmann P.E."/>
            <person name="Cook L.L."/>
            <person name="Hickenbotham M.T."/>
            <person name="Eldred J."/>
            <person name="Williams D."/>
            <person name="Jones T.A."/>
            <person name="She X."/>
            <person name="Ciccarelli F.D."/>
            <person name="Izaurralde E."/>
            <person name="Taylor J."/>
            <person name="Schmutz J."/>
            <person name="Myers R.M."/>
            <person name="Cox D.R."/>
            <person name="Huang X."/>
            <person name="McPherson J.D."/>
            <person name="Mardis E.R."/>
            <person name="Clifton S.W."/>
            <person name="Warren W.C."/>
            <person name="Chinwalla A.T."/>
            <person name="Eddy S.R."/>
            <person name="Marra M.A."/>
            <person name="Ovcharenko I."/>
            <person name="Furey T.S."/>
            <person name="Miller W."/>
            <person name="Eichler E.E."/>
            <person name="Bork P."/>
            <person name="Suyama M."/>
            <person name="Torrents D."/>
            <person name="Waterston R.H."/>
            <person name="Wilson R.K."/>
        </authorList>
    </citation>
    <scope>NUCLEOTIDE SEQUENCE [LARGE SCALE GENOMIC DNA]</scope>
</reference>
<reference key="3">
    <citation type="submission" date="2005-07" db="EMBL/GenBank/DDBJ databases">
        <authorList>
            <person name="Mural R.J."/>
            <person name="Istrail S."/>
            <person name="Sutton G.G."/>
            <person name="Florea L."/>
            <person name="Halpern A.L."/>
            <person name="Mobarry C.M."/>
            <person name="Lippert R."/>
            <person name="Walenz B."/>
            <person name="Shatkay H."/>
            <person name="Dew I."/>
            <person name="Miller J.R."/>
            <person name="Flanigan M.J."/>
            <person name="Edwards N.J."/>
            <person name="Bolanos R."/>
            <person name="Fasulo D."/>
            <person name="Halldorsson B.V."/>
            <person name="Hannenhalli S."/>
            <person name="Turner R."/>
            <person name="Yooseph S."/>
            <person name="Lu F."/>
            <person name="Nusskern D.R."/>
            <person name="Shue B.C."/>
            <person name="Zheng X.H."/>
            <person name="Zhong F."/>
            <person name="Delcher A.L."/>
            <person name="Huson D.H."/>
            <person name="Kravitz S.A."/>
            <person name="Mouchard L."/>
            <person name="Reinert K."/>
            <person name="Remington K.A."/>
            <person name="Clark A.G."/>
            <person name="Waterman M.S."/>
            <person name="Eichler E.E."/>
            <person name="Adams M.D."/>
            <person name="Hunkapiller M.W."/>
            <person name="Myers E.W."/>
            <person name="Venter J.C."/>
        </authorList>
    </citation>
    <scope>NUCLEOTIDE SEQUENCE [LARGE SCALE GENOMIC DNA]</scope>
</reference>
<reference key="4">
    <citation type="journal article" date="2004" name="Genome Res.">
        <title>The status, quality, and expansion of the NIH full-length cDNA project: the Mammalian Gene Collection (MGC).</title>
        <authorList>
            <consortium name="The MGC Project Team"/>
        </authorList>
    </citation>
    <scope>NUCLEOTIDE SEQUENCE [LARGE SCALE MRNA] (ISOFORM 1)</scope>
</reference>
<reference key="5">
    <citation type="journal article" date="2015" name="EMBO Rep.">
        <title>Plasticity of PI4KIIIalpha interactions at the plasma membrane.</title>
        <authorList>
            <person name="Chung J."/>
            <person name="Nakatsu F."/>
            <person name="Baskin J.M."/>
            <person name="De Camilli P."/>
        </authorList>
    </citation>
    <scope>SUBCELLULAR LOCATION</scope>
</reference>
<evidence type="ECO:0000250" key="1">
    <source>
        <dbReference type="UniProtKB" id="Q86TG1"/>
    </source>
</evidence>
<evidence type="ECO:0000250" key="2">
    <source>
        <dbReference type="UniProtKB" id="Q8C8S3"/>
    </source>
</evidence>
<evidence type="ECO:0000255" key="3"/>
<evidence type="ECO:0000269" key="4">
    <source>
    </source>
</evidence>
<evidence type="ECO:0000303" key="5">
    <source>
    </source>
</evidence>
<evidence type="ECO:0000305" key="6"/>
<evidence type="ECO:0000305" key="7">
    <source>
    </source>
</evidence>
<evidence type="ECO:0000312" key="8">
    <source>
        <dbReference type="HGNC" id="HGNC:37263"/>
    </source>
</evidence>
<name>T150C_HUMAN</name>
<gene>
    <name evidence="8" type="primary">TMEM150C</name>
    <name type="synonym">TTN3</name>
</gene>
<organism>
    <name type="scientific">Homo sapiens</name>
    <name type="common">Human</name>
    <dbReference type="NCBI Taxonomy" id="9606"/>
    <lineage>
        <taxon>Eukaryota</taxon>
        <taxon>Metazoa</taxon>
        <taxon>Chordata</taxon>
        <taxon>Craniata</taxon>
        <taxon>Vertebrata</taxon>
        <taxon>Euteleostomi</taxon>
        <taxon>Mammalia</taxon>
        <taxon>Eutheria</taxon>
        <taxon>Euarchontoglires</taxon>
        <taxon>Primates</taxon>
        <taxon>Haplorrhini</taxon>
        <taxon>Catarrhini</taxon>
        <taxon>Hominidae</taxon>
        <taxon>Homo</taxon>
    </lineage>
</organism>
<protein>
    <recommendedName>
        <fullName evidence="6">Transmembrane protein 150C</fullName>
    </recommendedName>
    <alternativeName>
        <fullName>Tentonin 3</fullName>
    </alternativeName>
</protein>